<keyword id="KW-0007">Acetylation</keyword>
<keyword id="KW-1003">Cell membrane</keyword>
<keyword id="KW-0175">Coiled coil</keyword>
<keyword id="KW-0963">Cytoplasm</keyword>
<keyword id="KW-0206">Cytoskeleton</keyword>
<keyword id="KW-0903">Direct protein sequencing</keyword>
<keyword id="KW-0325">Glycoprotein</keyword>
<keyword id="KW-0403">Intermediate filament</keyword>
<keyword id="KW-1017">Isopeptide bond</keyword>
<keyword id="KW-0472">Membrane</keyword>
<keyword id="KW-0539">Nucleus</keyword>
<keyword id="KW-0597">Phosphoprotein</keyword>
<keyword id="KW-1185">Reference proteome</keyword>
<keyword id="KW-0702">S-nitrosylation</keyword>
<keyword id="KW-0832">Ubl conjugation</keyword>
<organism>
    <name type="scientific">Mus musculus</name>
    <name type="common">Mouse</name>
    <dbReference type="NCBI Taxonomy" id="10090"/>
    <lineage>
        <taxon>Eukaryota</taxon>
        <taxon>Metazoa</taxon>
        <taxon>Chordata</taxon>
        <taxon>Craniata</taxon>
        <taxon>Vertebrata</taxon>
        <taxon>Euteleostomi</taxon>
        <taxon>Mammalia</taxon>
        <taxon>Eutheria</taxon>
        <taxon>Euarchontoglires</taxon>
        <taxon>Glires</taxon>
        <taxon>Rodentia</taxon>
        <taxon>Myomorpha</taxon>
        <taxon>Muroidea</taxon>
        <taxon>Muridae</taxon>
        <taxon>Murinae</taxon>
        <taxon>Mus</taxon>
        <taxon>Mus</taxon>
    </lineage>
</organism>
<gene>
    <name evidence="25" type="primary">Vim</name>
</gene>
<dbReference type="EMBL" id="M24849">
    <property type="protein sequence ID" value="AAA40555.1"/>
    <property type="molecule type" value="mRNA"/>
</dbReference>
<dbReference type="EMBL" id="X56397">
    <property type="protein sequence ID" value="CAA39807.1"/>
    <property type="molecule type" value="mRNA"/>
</dbReference>
<dbReference type="EMBL" id="M26251">
    <property type="protein sequence ID" value="AAA40556.1"/>
    <property type="molecule type" value="mRNA"/>
</dbReference>
<dbReference type="EMBL" id="Z22526">
    <property type="protein sequence ID" value="CAA80251.1"/>
    <property type="molecule type" value="Genomic_DNA"/>
</dbReference>
<dbReference type="EMBL" id="X51438">
    <property type="protein sequence ID" value="CAA35803.1"/>
    <property type="molecule type" value="mRNA"/>
</dbReference>
<dbReference type="EMBL" id="Y07738">
    <property type="protein sequence ID" value="CAA69019.1"/>
    <property type="molecule type" value="Genomic_DNA"/>
</dbReference>
<dbReference type="EMBL" id="AK033175">
    <property type="protein sequence ID" value="BAC28181.1"/>
    <property type="molecule type" value="mRNA"/>
</dbReference>
<dbReference type="EMBL" id="D50805">
    <property type="protein sequence ID" value="BAA19834.1"/>
    <property type="molecule type" value="Genomic_DNA"/>
</dbReference>
<dbReference type="CCDS" id="CCDS15696.1"/>
<dbReference type="PIR" id="A43803">
    <property type="entry name" value="A43803"/>
</dbReference>
<dbReference type="RefSeq" id="NP_035831.2">
    <property type="nucleotide sequence ID" value="NM_011701.4"/>
</dbReference>
<dbReference type="SMR" id="P20152"/>
<dbReference type="BioGRID" id="204524">
    <property type="interactions" value="68"/>
</dbReference>
<dbReference type="CORUM" id="P20152"/>
<dbReference type="DIP" id="DIP-188N"/>
<dbReference type="FunCoup" id="P20152">
    <property type="interactions" value="1261"/>
</dbReference>
<dbReference type="IntAct" id="P20152">
    <property type="interactions" value="33"/>
</dbReference>
<dbReference type="MINT" id="P20152"/>
<dbReference type="STRING" id="10090.ENSMUSP00000028062"/>
<dbReference type="GlyCosmos" id="P20152">
    <property type="glycosylation" value="3 sites, No reported glycans"/>
</dbReference>
<dbReference type="GlyGen" id="P20152">
    <property type="glycosylation" value="14 sites, 1 N-linked glycan (1 site), 1 O-linked glycan (11 sites)"/>
</dbReference>
<dbReference type="iPTMnet" id="P20152"/>
<dbReference type="PhosphoSitePlus" id="P20152"/>
<dbReference type="SwissPalm" id="P20152"/>
<dbReference type="REPRODUCTION-2DPAGE" id="IPI00227299"/>
<dbReference type="jPOST" id="P20152"/>
<dbReference type="PaxDb" id="10090-ENSMUSP00000028062"/>
<dbReference type="PeptideAtlas" id="P20152"/>
<dbReference type="ProteomicsDB" id="298281"/>
<dbReference type="Pumba" id="P20152"/>
<dbReference type="Antibodypedia" id="938">
    <property type="antibodies" value="3740 antibodies from 61 providers"/>
</dbReference>
<dbReference type="DNASU" id="22352"/>
<dbReference type="Ensembl" id="ENSMUST00000028062.8">
    <property type="protein sequence ID" value="ENSMUSP00000028062.3"/>
    <property type="gene ID" value="ENSMUSG00000026728.10"/>
</dbReference>
<dbReference type="GeneID" id="22352"/>
<dbReference type="KEGG" id="mmu:22352"/>
<dbReference type="UCSC" id="uc008ikb.2">
    <property type="organism name" value="mouse"/>
</dbReference>
<dbReference type="AGR" id="MGI:98932"/>
<dbReference type="CTD" id="7431"/>
<dbReference type="MGI" id="MGI:98932">
    <property type="gene designation" value="Vim"/>
</dbReference>
<dbReference type="VEuPathDB" id="HostDB:ENSMUSG00000026728"/>
<dbReference type="eggNOG" id="KOG0977">
    <property type="taxonomic scope" value="Eukaryota"/>
</dbReference>
<dbReference type="GeneTree" id="ENSGT00940000156146"/>
<dbReference type="InParanoid" id="P20152"/>
<dbReference type="OMA" id="GGMYATK"/>
<dbReference type="OrthoDB" id="2441647at2759"/>
<dbReference type="PhylomeDB" id="P20152"/>
<dbReference type="TreeFam" id="TF330122"/>
<dbReference type="Reactome" id="R-MMU-264870">
    <property type="pathway name" value="Caspase-mediated cleavage of cytoskeletal proteins"/>
</dbReference>
<dbReference type="Reactome" id="R-MMU-390522">
    <property type="pathway name" value="Striated Muscle Contraction"/>
</dbReference>
<dbReference type="Reactome" id="R-MMU-9013422">
    <property type="pathway name" value="RHOBTB1 GTPase cycle"/>
</dbReference>
<dbReference type="Reactome" id="R-MMU-9646399">
    <property type="pathway name" value="Aggrephagy"/>
</dbReference>
<dbReference type="BioGRID-ORCS" id="22352">
    <property type="hits" value="7 hits in 81 CRISPR screens"/>
</dbReference>
<dbReference type="CD-CODE" id="01CA17F3">
    <property type="entry name" value="Centrosome"/>
</dbReference>
<dbReference type="CD-CODE" id="CE726F99">
    <property type="entry name" value="Postsynaptic density"/>
</dbReference>
<dbReference type="ChiTaRS" id="Vim">
    <property type="organism name" value="mouse"/>
</dbReference>
<dbReference type="PRO" id="PR:P20152"/>
<dbReference type="Proteomes" id="UP000000589">
    <property type="component" value="Chromosome 2"/>
</dbReference>
<dbReference type="RNAct" id="P20152">
    <property type="molecule type" value="protein"/>
</dbReference>
<dbReference type="Bgee" id="ENSMUSG00000026728">
    <property type="expression patterns" value="Expressed in endothelial cell of lymphatic vessel and 280 other cell types or tissues"/>
</dbReference>
<dbReference type="ExpressionAtlas" id="P20152">
    <property type="expression patterns" value="baseline and differential"/>
</dbReference>
<dbReference type="GO" id="GO:0031252">
    <property type="term" value="C:cell leading edge"/>
    <property type="evidence" value="ECO:0000314"/>
    <property type="project" value="MGI"/>
</dbReference>
<dbReference type="GO" id="GO:0042995">
    <property type="term" value="C:cell projection"/>
    <property type="evidence" value="ECO:0000314"/>
    <property type="project" value="MGI"/>
</dbReference>
<dbReference type="GO" id="GO:0005737">
    <property type="term" value="C:cytoplasm"/>
    <property type="evidence" value="ECO:0000314"/>
    <property type="project" value="UniProtKB"/>
</dbReference>
<dbReference type="GO" id="GO:0005856">
    <property type="term" value="C:cytoskeleton"/>
    <property type="evidence" value="ECO:0000266"/>
    <property type="project" value="MGI"/>
</dbReference>
<dbReference type="GO" id="GO:0005829">
    <property type="term" value="C:cytosol"/>
    <property type="evidence" value="ECO:0007669"/>
    <property type="project" value="Ensembl"/>
</dbReference>
<dbReference type="GO" id="GO:0005882">
    <property type="term" value="C:intermediate filament"/>
    <property type="evidence" value="ECO:0000314"/>
    <property type="project" value="MGI"/>
</dbReference>
<dbReference type="GO" id="GO:0043005">
    <property type="term" value="C:neuron projection"/>
    <property type="evidence" value="ECO:0000314"/>
    <property type="project" value="MGI"/>
</dbReference>
<dbReference type="GO" id="GO:0016363">
    <property type="term" value="C:nuclear matrix"/>
    <property type="evidence" value="ECO:0007669"/>
    <property type="project" value="UniProtKB-SubCell"/>
</dbReference>
<dbReference type="GO" id="GO:0005777">
    <property type="term" value="C:peroxisome"/>
    <property type="evidence" value="ECO:0007669"/>
    <property type="project" value="Ensembl"/>
</dbReference>
<dbReference type="GO" id="GO:0045335">
    <property type="term" value="C:phagocytic vesicle"/>
    <property type="evidence" value="ECO:0000314"/>
    <property type="project" value="MGI"/>
</dbReference>
<dbReference type="GO" id="GO:0005886">
    <property type="term" value="C:plasma membrane"/>
    <property type="evidence" value="ECO:0000314"/>
    <property type="project" value="UniProtKB"/>
</dbReference>
<dbReference type="GO" id="GO:0045098">
    <property type="term" value="C:type III intermediate filament"/>
    <property type="evidence" value="ECO:0000304"/>
    <property type="project" value="MGI"/>
</dbReference>
<dbReference type="GO" id="GO:0003725">
    <property type="term" value="F:double-stranded RNA binding"/>
    <property type="evidence" value="ECO:0000266"/>
    <property type="project" value="MGI"/>
</dbReference>
<dbReference type="GO" id="GO:0042802">
    <property type="term" value="F:identical protein binding"/>
    <property type="evidence" value="ECO:0007669"/>
    <property type="project" value="Ensembl"/>
</dbReference>
<dbReference type="GO" id="GO:1990254">
    <property type="term" value="F:keratin filament binding"/>
    <property type="evidence" value="ECO:0007669"/>
    <property type="project" value="Ensembl"/>
</dbReference>
<dbReference type="GO" id="GO:0019904">
    <property type="term" value="F:protein domain specific binding"/>
    <property type="evidence" value="ECO:0007669"/>
    <property type="project" value="Ensembl"/>
</dbReference>
<dbReference type="GO" id="GO:0003723">
    <property type="term" value="F:RNA binding"/>
    <property type="evidence" value="ECO:0000353"/>
    <property type="project" value="MGI"/>
</dbReference>
<dbReference type="GO" id="GO:0097110">
    <property type="term" value="F:scaffold protein binding"/>
    <property type="evidence" value="ECO:0007669"/>
    <property type="project" value="Ensembl"/>
</dbReference>
<dbReference type="GO" id="GO:0005200">
    <property type="term" value="F:structural constituent of cytoskeleton"/>
    <property type="evidence" value="ECO:0000315"/>
    <property type="project" value="MGI"/>
</dbReference>
<dbReference type="GO" id="GO:0005212">
    <property type="term" value="F:structural constituent of eye lens"/>
    <property type="evidence" value="ECO:0000314"/>
    <property type="project" value="MGI"/>
</dbReference>
<dbReference type="GO" id="GO:0014002">
    <property type="term" value="P:astrocyte development"/>
    <property type="evidence" value="ECO:0000316"/>
    <property type="project" value="MGI"/>
</dbReference>
<dbReference type="GO" id="GO:0060020">
    <property type="term" value="P:Bergmann glial cell differentiation"/>
    <property type="evidence" value="ECO:0000315"/>
    <property type="project" value="MGI"/>
</dbReference>
<dbReference type="GO" id="GO:0071222">
    <property type="term" value="P:cellular response to lipopolysaccharide"/>
    <property type="evidence" value="ECO:0000250"/>
    <property type="project" value="UniProtKB"/>
</dbReference>
<dbReference type="GO" id="GO:0071225">
    <property type="term" value="P:cellular response to muramyl dipeptide"/>
    <property type="evidence" value="ECO:0000250"/>
    <property type="project" value="UniProtKB"/>
</dbReference>
<dbReference type="GO" id="GO:0071346">
    <property type="term" value="P:cellular response to type II interferon"/>
    <property type="evidence" value="ECO:0000314"/>
    <property type="project" value="MGI"/>
</dbReference>
<dbReference type="GO" id="GO:0045109">
    <property type="term" value="P:intermediate filament organization"/>
    <property type="evidence" value="ECO:0000315"/>
    <property type="project" value="UniProtKB"/>
</dbReference>
<dbReference type="GO" id="GO:0045103">
    <property type="term" value="P:intermediate filament-based process"/>
    <property type="evidence" value="ECO:0000315"/>
    <property type="project" value="MGI"/>
</dbReference>
<dbReference type="GO" id="GO:0070307">
    <property type="term" value="P:lens fiber cell development"/>
    <property type="evidence" value="ECO:0000314"/>
    <property type="project" value="MGI"/>
</dbReference>
<dbReference type="GO" id="GO:0010977">
    <property type="term" value="P:negative regulation of neuron projection development"/>
    <property type="evidence" value="ECO:0000316"/>
    <property type="project" value="MGI"/>
</dbReference>
<dbReference type="GO" id="GO:0031175">
    <property type="term" value="P:neuron projection development"/>
    <property type="evidence" value="ECO:0000316"/>
    <property type="project" value="MGI"/>
</dbReference>
<dbReference type="GO" id="GO:0032967">
    <property type="term" value="P:positive regulation of collagen biosynthetic process"/>
    <property type="evidence" value="ECO:0007669"/>
    <property type="project" value="Ensembl"/>
</dbReference>
<dbReference type="GO" id="GO:0010634">
    <property type="term" value="P:positive regulation of epithelial cell migration"/>
    <property type="evidence" value="ECO:0000250"/>
    <property type="project" value="UniProtKB"/>
</dbReference>
<dbReference type="GO" id="GO:0010628">
    <property type="term" value="P:positive regulation of gene expression"/>
    <property type="evidence" value="ECO:0000315"/>
    <property type="project" value="UniProtKB"/>
</dbReference>
<dbReference type="GO" id="GO:0043488">
    <property type="term" value="P:regulation of mRNA stability"/>
    <property type="evidence" value="ECO:0007669"/>
    <property type="project" value="Ensembl"/>
</dbReference>
<dbReference type="FunFam" id="1.20.5.1160:FF:000001">
    <property type="entry name" value="Keratin type II"/>
    <property type="match status" value="1"/>
</dbReference>
<dbReference type="FunFam" id="1.20.5.170:FF:000002">
    <property type="entry name" value="Type I keratin KA11"/>
    <property type="match status" value="1"/>
</dbReference>
<dbReference type="FunFam" id="1.20.5.500:FF:000001">
    <property type="entry name" value="Type II keratin 23"/>
    <property type="match status" value="1"/>
</dbReference>
<dbReference type="Gene3D" id="1.20.5.170">
    <property type="match status" value="1"/>
</dbReference>
<dbReference type="Gene3D" id="1.20.5.500">
    <property type="entry name" value="Single helix bin"/>
    <property type="match status" value="1"/>
</dbReference>
<dbReference type="Gene3D" id="1.20.5.1160">
    <property type="entry name" value="Vasodilator-stimulated phosphoprotein"/>
    <property type="match status" value="1"/>
</dbReference>
<dbReference type="InterPro" id="IPR018039">
    <property type="entry name" value="IF_conserved"/>
</dbReference>
<dbReference type="InterPro" id="IPR039008">
    <property type="entry name" value="IF_rod_dom"/>
</dbReference>
<dbReference type="InterPro" id="IPR006821">
    <property type="entry name" value="Intermed_filament_DNA-bd"/>
</dbReference>
<dbReference type="InterPro" id="IPR050405">
    <property type="entry name" value="Intermediate_filament"/>
</dbReference>
<dbReference type="PANTHER" id="PTHR45652">
    <property type="entry name" value="GLIAL FIBRILLARY ACIDIC PROTEIN"/>
    <property type="match status" value="1"/>
</dbReference>
<dbReference type="PANTHER" id="PTHR45652:SF5">
    <property type="entry name" value="VIMENTIN"/>
    <property type="match status" value="1"/>
</dbReference>
<dbReference type="Pfam" id="PF00038">
    <property type="entry name" value="Filament"/>
    <property type="match status" value="1"/>
</dbReference>
<dbReference type="Pfam" id="PF04732">
    <property type="entry name" value="Filament_head"/>
    <property type="match status" value="1"/>
</dbReference>
<dbReference type="SMART" id="SM01391">
    <property type="entry name" value="Filament"/>
    <property type="match status" value="1"/>
</dbReference>
<dbReference type="SUPFAM" id="SSF64593">
    <property type="entry name" value="Intermediate filament protein, coiled coil region"/>
    <property type="match status" value="2"/>
</dbReference>
<dbReference type="PROSITE" id="PS00226">
    <property type="entry name" value="IF_ROD_1"/>
    <property type="match status" value="1"/>
</dbReference>
<dbReference type="PROSITE" id="PS51842">
    <property type="entry name" value="IF_ROD_2"/>
    <property type="match status" value="1"/>
</dbReference>
<protein>
    <recommendedName>
        <fullName evidence="25">Vimentin</fullName>
    </recommendedName>
</protein>
<evidence type="ECO:0000250" key="1"/>
<evidence type="ECO:0000250" key="2">
    <source>
        <dbReference type="UniProtKB" id="A0A8C0N8E3"/>
    </source>
</evidence>
<evidence type="ECO:0000250" key="3">
    <source>
        <dbReference type="UniProtKB" id="P08670"/>
    </source>
</evidence>
<evidence type="ECO:0000250" key="4">
    <source>
        <dbReference type="UniProtKB" id="P31000"/>
    </source>
</evidence>
<evidence type="ECO:0000250" key="5">
    <source>
        <dbReference type="UniProtKB" id="P84198"/>
    </source>
</evidence>
<evidence type="ECO:0000255" key="6">
    <source>
        <dbReference type="PROSITE-ProRule" id="PRU01188"/>
    </source>
</evidence>
<evidence type="ECO:0000256" key="7">
    <source>
        <dbReference type="SAM" id="MobiDB-lite"/>
    </source>
</evidence>
<evidence type="ECO:0000269" key="8">
    <source>
    </source>
</evidence>
<evidence type="ECO:0000269" key="9">
    <source>
    </source>
</evidence>
<evidence type="ECO:0000269" key="10">
    <source>
    </source>
</evidence>
<evidence type="ECO:0000269" key="11">
    <source>
    </source>
</evidence>
<evidence type="ECO:0000269" key="12">
    <source>
    </source>
</evidence>
<evidence type="ECO:0000269" key="13">
    <source>
    </source>
</evidence>
<evidence type="ECO:0000269" key="14">
    <source>
    </source>
</evidence>
<evidence type="ECO:0000269" key="15">
    <source>
    </source>
</evidence>
<evidence type="ECO:0000269" key="16">
    <source>
    </source>
</evidence>
<evidence type="ECO:0000269" key="17">
    <source>
    </source>
</evidence>
<evidence type="ECO:0000269" key="18">
    <source>
    </source>
</evidence>
<evidence type="ECO:0000269" key="19">
    <source>
    </source>
</evidence>
<evidence type="ECO:0000269" key="20">
    <source>
    </source>
</evidence>
<evidence type="ECO:0000269" key="21">
    <source>
    </source>
</evidence>
<evidence type="ECO:0000269" key="22">
    <source>
    </source>
</evidence>
<evidence type="ECO:0000269" key="23">
    <source>
    </source>
</evidence>
<evidence type="ECO:0000305" key="24"/>
<evidence type="ECO:0000312" key="25">
    <source>
        <dbReference type="MGI" id="MGI:98932"/>
    </source>
</evidence>
<evidence type="ECO:0007744" key="26">
    <source>
    </source>
</evidence>
<evidence type="ECO:0007744" key="27">
    <source>
    </source>
</evidence>
<evidence type="ECO:0007744" key="28">
    <source>
    </source>
</evidence>
<evidence type="ECO:0007744" key="29">
    <source>
    </source>
</evidence>
<evidence type="ECO:0007744" key="30">
    <source>
    </source>
</evidence>
<evidence type="ECO:0007744" key="31">
    <source>
    </source>
</evidence>
<evidence type="ECO:0007744" key="32">
    <source>
    </source>
</evidence>
<comment type="function">
    <text evidence="2 4">Vimentins are class-III intermediate filaments found in various non-epithelial cells, especially mesenchymal cells. Vimentin is attached to the nucleus, endoplasmic reticulum, and mitochondria, either laterally or terminally. Plays a role in cell directional movement, orientation, cell sheet organization and Golgi complex polarization at the cell migration front (By similarity). Protects SCRIB from proteasomal degradation and facilitates its localization to intermediate filaments in a cell contact-mediated manner (By similarity).</text>
</comment>
<comment type="function">
    <text evidence="3">Involved with LARP6 in the stabilization of type I collagen mRNAs for CO1A1 and CO1A2.</text>
</comment>
<comment type="subunit">
    <text evidence="3 4 10 11 12 14 15 17 18 19 21">Homomer assembled from elementary dimers (By similarity). Identified in complexes that contain VIM, EZR, AHNAK, BFSP1, BFSP2, ANK2, PLEC, PRX and spectrin (PubMed:21745462). Interacts with BCAS3 (By similarity). Interacts with LGSN (PubMed:18178558). Interacts with SYNM (PubMed:17356066). Interacts (via rod region) with PLEC (via CH 1 domain) (PubMed:15128297). Interacts with PLEC isoform 1C (PubMed:24940650). Interacts with STK33 (By similarity). Interacts with LARP6 (By similarity). Interacts with RAB8B (By similarity). Interacts with TOR1A; the interaction associates TOR1A with the cytoskeleton (PubMed:18827015). Interacts with TOR1AIP1 (By similarity). Interacts with DIAPH1 (By similarity). Interacts with EPPK1; interaction is dependent of higher-order structure of intermediate filament (By similarity). Interacts with the non-receptor tyrosine kinase SRMS; the interaction leads to phosphorylation of VIM (By similarity). Interacts with NOD2 (By similarity). Interacts (via head region) with CORO1C (PubMed:27178841). Interacts with HDGF (By similarity). Interacts with PRKCE (via phorbol-ester/DAG-type 2 domain) (By similarity). Interacts with BFSP2 (PubMed:19029034). Interacts with PPL (PubMed:19029034). Interacts with PKP1 and PKP2 (By similarity). Interacts with SCRIB (via PDZ domains); the interaction protects SCRIB from proteasomal degradation and facilitates SCRIB localization to intermediate filaments, the interaction is reduced by cell contact inhibition (PubMed:19386766).</text>
</comment>
<comment type="interaction">
    <interactant intactId="EBI-299269">
        <id>P20152</id>
    </interactant>
    <interactant intactId="EBI-368293">
        <id>Q9R269</id>
        <label>Ppl</label>
    </interactant>
    <organismsDiffer>false</organismsDiffer>
    <experiments>2</experiments>
</comment>
<comment type="interaction">
    <interactant intactId="EBI-299269">
        <id>P20152</id>
    </interactant>
    <interactant intactId="EBI-444379">
        <id>P35465</id>
        <label>Pak1</label>
    </interactant>
    <organismsDiffer>true</organismsDiffer>
    <experiments>2</experiments>
</comment>
<comment type="interaction">
    <interactant intactId="EBI-299269">
        <id>P20152</id>
    </interactant>
    <interactant intactId="EBI-1042651">
        <id>Q96RG2</id>
        <label>PASK</label>
    </interactant>
    <organismsDiffer>true</organismsDiffer>
    <experiments>2</experiments>
</comment>
<comment type="interaction">
    <interactant intactId="EBI-299269">
        <id>P20152</id>
    </interactant>
    <interactant intactId="EBI-9541048">
        <id>P17452</id>
        <label>toxA</label>
    </interactant>
    <organismsDiffer>true</organismsDiffer>
    <experiments>4</experiments>
</comment>
<comment type="subcellular location">
    <subcellularLocation>
        <location evidence="15 22">Cytoplasm</location>
    </subcellularLocation>
    <subcellularLocation>
        <location evidence="3">Cytoplasm</location>
        <location evidence="3">Cytoskeleton</location>
    </subcellularLocation>
    <subcellularLocation>
        <location evidence="4">Nucleus matrix</location>
    </subcellularLocation>
    <subcellularLocation>
        <location evidence="15">Cell membrane</location>
    </subcellularLocation>
</comment>
<comment type="tissue specificity">
    <text evidence="8 9 15 16 18 22">Detected in eye lens fiber cells (at protein level) (PubMed:14985306, PubMed:15037121, PubMed:19029034, PubMed:21745462, PubMed:27559293). Expressed in retinal lens epithelial cells (at protein level) (PubMed:27559293). Expressed in Langerhans cells in the epidermis (at protein level) (PubMed:19267394).</text>
</comment>
<comment type="developmental stage">
    <text evidence="15">Expressed in the cytoplasm of anterior lens epithelial cells, expression becomes predominantly membranous as lens fiber cell differentiation progresses at 3 weeks of age.</text>
</comment>
<comment type="domain">
    <text evidence="3">The central alpha-helical coiled-coil IF rod domain mediates elementary homodimerization.</text>
</comment>
<comment type="domain">
    <text evidence="3">The [IL]-x-C-x-x-[DE] motif is a proposed target motif for cysteine S-nitrosylation mediated by the iNOS-S100A8/A9 transnitrosylase complex.</text>
</comment>
<comment type="PTM">
    <text evidence="3 4">Phosphorylation by PKN1 inhibits the formation of filaments. Filament disassembly during mitosis is promoted by phosphorylation at Ser-55 as well as by nestin. One of the most prominent phosphoproteins in various cells of mesenchymal origin. Phosphorylation is enhanced during cell division, at which time vimentin filaments are significantly reorganized. Phosphorylated at Ser-56 by CDK5 during neutrophil secretion in the cytoplasm. Phosphorylated by STK33. Phosphorylated on tyrosine residues by SRMS.</text>
</comment>
<comment type="PTM">
    <text evidence="3">S-nitrosylation is induced by interferon-gamma and oxidatively-modified low-densitity lipoprotein (LDL(ox)) possibly implicating the iNOS-S100A8/9 transnitrosylase complex.</text>
</comment>
<comment type="disruption phenotype">
    <text evidence="9 22">Morphological change from tubular conformation to circular conformation of beaded filament structures in retinal lens epithelium, potentially due to loss of contacts with surrounding intermediate filaments (PubMed:27559293). BFSP2 and VIM double knockout mice show a complete loss of cytoplasmic cytoskeleton in retinal lens fiber cells (PubMed:15037121).</text>
</comment>
<comment type="similarity">
    <text evidence="6">Belongs to the intermediate filament family.</text>
</comment>
<proteinExistence type="evidence at protein level"/>
<sequence>MSTRSVSSSSYRRMFGGSGTSSRPSSNRSYVTTSTRTYSLGSALRPSTSRSLYSSSPGGAYVTRSSAVRLRSSVPGVRLLQDSVDFSLADAINTEFKNTRTNEKVELQELNDRFANYIDKVRFLEQQNKILLAELEQLKGQGKSRLGDLYEEEMRELRRQVDQLTNDKARVEVERDNLAEDIMRLREKLQEEMLQREEAESTLQSFRQDVDNASLARLDLERKVESLQEEIAFLKKLHDEEIQELQAQIQEQHVQIDVDVSKPDLTAALRDVRQQYESVAAKNLQEAEEWYKSKFADLSEAANRNNDALRQAKQESNEYRRQVQSLTCEVDALKGTNESLERQMREMEENFALEAANYQDTIGRLQDEIQNMKEEMARHLREYQDLLNVKMALDIEIATYRKLLEGEESRISLPLPTFSSLNLRETNLESLPLVDTHSKRTLLIKTVETRDGQVINETSQHHDDLE</sequence>
<feature type="initiator methionine" description="Removed" evidence="3">
    <location>
        <position position="1"/>
    </location>
</feature>
<feature type="chain" id="PRO_0000063756" description="Vimentin">
    <location>
        <begin position="2"/>
        <end position="466"/>
    </location>
</feature>
<feature type="domain" description="IF rod" evidence="6">
    <location>
        <begin position="103"/>
        <end position="411"/>
    </location>
</feature>
<feature type="region of interest" description="Disordered" evidence="7">
    <location>
        <begin position="1"/>
        <end position="33"/>
    </location>
</feature>
<feature type="region of interest" description="Head">
    <location>
        <begin position="2"/>
        <end position="95"/>
    </location>
</feature>
<feature type="region of interest" description="Coil 1A">
    <location>
        <begin position="96"/>
        <end position="131"/>
    </location>
</feature>
<feature type="region of interest" description="Linker 1">
    <location>
        <begin position="132"/>
        <end position="153"/>
    </location>
</feature>
<feature type="region of interest" description="Coil 1B">
    <location>
        <begin position="154"/>
        <end position="245"/>
    </location>
</feature>
<feature type="region of interest" description="Linker 12">
    <location>
        <begin position="246"/>
        <end position="268"/>
    </location>
</feature>
<feature type="region of interest" description="Coil 2">
    <location>
        <begin position="269"/>
        <end position="407"/>
    </location>
</feature>
<feature type="region of interest" description="Tail">
    <location>
        <begin position="408"/>
        <end position="466"/>
    </location>
</feature>
<feature type="coiled-coil region">
    <location>
        <begin position="96"/>
        <end position="131"/>
    </location>
</feature>
<feature type="coiled-coil region">
    <location>
        <begin position="154"/>
        <end position="245"/>
    </location>
</feature>
<feature type="coiled-coil region">
    <location>
        <begin position="303"/>
        <end position="407"/>
    </location>
</feature>
<feature type="short sequence motif" description="[IL]-x-C-x-x-[DE] motif" evidence="3">
    <location>
        <begin position="326"/>
        <end position="329"/>
    </location>
</feature>
<feature type="compositionally biased region" description="Low complexity" evidence="7">
    <location>
        <begin position="1"/>
        <end position="13"/>
    </location>
</feature>
<feature type="compositionally biased region" description="Low complexity" evidence="7">
    <location>
        <begin position="20"/>
        <end position="33"/>
    </location>
</feature>
<feature type="site" description="Stutter" evidence="1">
    <location>
        <position position="351"/>
    </location>
</feature>
<feature type="modified residue" description="N-acetylserine" evidence="3">
    <location>
        <position position="2"/>
    </location>
</feature>
<feature type="modified residue" description="Phosphoserine" evidence="3">
    <location>
        <position position="5"/>
    </location>
</feature>
<feature type="modified residue" description="Phosphoserine; by PKA and PKC; alternate" evidence="20">
    <location>
        <position position="7"/>
    </location>
</feature>
<feature type="modified residue" description="Phosphoserine" evidence="3">
    <location>
        <position position="8"/>
    </location>
</feature>
<feature type="modified residue" description="Phosphoserine; by PKC" evidence="20">
    <location>
        <position position="9"/>
    </location>
</feature>
<feature type="modified residue" description="Phosphoserine; by PKC" evidence="20">
    <location>
        <position position="10"/>
    </location>
</feature>
<feature type="modified residue" description="Phosphothreonine" evidence="3">
    <location>
        <position position="20"/>
    </location>
</feature>
<feature type="modified residue" description="Phosphoserine; by PKC" evidence="20">
    <location>
        <position position="21"/>
    </location>
</feature>
<feature type="modified residue" description="Phosphoserine; by PKA and PKC" evidence="20">
    <location>
        <position position="25"/>
    </location>
</feature>
<feature type="modified residue" description="Phosphoserine; by PKC" evidence="20">
    <location>
        <position position="26"/>
    </location>
</feature>
<feature type="modified residue" description="Phosphoserine; by PKC; alternate" evidence="20">
    <location>
        <position position="34"/>
    </location>
</feature>
<feature type="modified residue" description="Phosphoserine; by CaMK2, PKA, PKC and ROCK2" evidence="13 20 23 29">
    <location>
        <position position="39"/>
    </location>
</feature>
<feature type="modified residue" description="Phosphoserine; by PKC" evidence="20">
    <location>
        <position position="42"/>
    </location>
</feature>
<feature type="modified residue" description="Phosphoserine; by PKA" evidence="20">
    <location>
        <position position="47"/>
    </location>
</feature>
<feature type="modified residue" description="Phosphoserine" evidence="29">
    <location>
        <position position="49"/>
    </location>
</feature>
<feature type="modified residue" description="Phosphoserine; by PKA and PKC" evidence="20 31">
    <location>
        <position position="51"/>
    </location>
</feature>
<feature type="modified residue" description="Phosphotyrosine" evidence="28">
    <location>
        <position position="53"/>
    </location>
</feature>
<feature type="modified residue" description="Phosphoserine" evidence="4">
    <location>
        <position position="55"/>
    </location>
</feature>
<feature type="modified residue" description="Phosphoserine" evidence="27 29 30 31">
    <location>
        <position position="56"/>
    </location>
</feature>
<feature type="modified residue" description="Phosphotyrosine" evidence="28">
    <location>
        <position position="61"/>
    </location>
</feature>
<feature type="modified residue" description="Phosphoserine; by PKA and PKC" evidence="20 29">
    <location>
        <position position="66"/>
    </location>
</feature>
<feature type="modified residue" description="Phosphoserine; by AURKB and ROCK2" evidence="23">
    <location>
        <position position="72"/>
    </location>
</feature>
<feature type="modified residue" description="Phosphoserine" evidence="3">
    <location>
        <position position="73"/>
    </location>
</feature>
<feature type="modified residue" description="Phosphoserine; by CaMK2" evidence="13 26 31">
    <location>
        <position position="83"/>
    </location>
</feature>
<feature type="modified residue" description="Phosphoserine" evidence="3">
    <location>
        <position position="87"/>
    </location>
</feature>
<feature type="modified residue" description="Phosphotyrosine" evidence="3">
    <location>
        <position position="117"/>
    </location>
</feature>
<feature type="modified residue" description="N6-acetyllysine; alternate" evidence="32">
    <location>
        <position position="120"/>
    </location>
</feature>
<feature type="modified residue" description="N6-succinyllysine; alternate" evidence="32">
    <location>
        <position position="120"/>
    </location>
</feature>
<feature type="modified residue" description="N6-acetyllysine; alternate" evidence="32">
    <location>
        <position position="129"/>
    </location>
</feature>
<feature type="modified residue" description="N6-succinyllysine; alternate" evidence="32">
    <location>
        <position position="129"/>
    </location>
</feature>
<feature type="modified residue" description="N6-acetyllysine; alternate" evidence="32">
    <location>
        <position position="139"/>
    </location>
</feature>
<feature type="modified residue" description="Phosphoserine" evidence="3">
    <location>
        <position position="144"/>
    </location>
</feature>
<feature type="modified residue" description="N6-acetyllysine" evidence="32">
    <location>
        <position position="168"/>
    </location>
</feature>
<feature type="modified residue" description="N6-acetyllysine; alternate" evidence="32">
    <location>
        <position position="188"/>
    </location>
</feature>
<feature type="modified residue" description="N6-succinyllysine; alternate" evidence="32">
    <location>
        <position position="188"/>
    </location>
</feature>
<feature type="modified residue" description="Phosphoserine" evidence="30">
    <location>
        <position position="214"/>
    </location>
</feature>
<feature type="modified residue" description="N6-acetyllysine; alternate" evidence="32">
    <location>
        <position position="223"/>
    </location>
</feature>
<feature type="modified residue" description="Phosphoserine" evidence="3">
    <location>
        <position position="226"/>
    </location>
</feature>
<feature type="modified residue" description="N6-acetyllysine" evidence="32">
    <location>
        <position position="235"/>
    </location>
</feature>
<feature type="modified residue" description="N6-acetyllysine; alternate" evidence="32">
    <location>
        <position position="294"/>
    </location>
</feature>
<feature type="modified residue" description="N6-succinyllysine; alternate" evidence="32">
    <location>
        <position position="294"/>
    </location>
</feature>
<feature type="modified residue" description="Phosphoserine" evidence="3">
    <location>
        <position position="299"/>
    </location>
</feature>
<feature type="modified residue" description="Phosphoserine" evidence="31">
    <location>
        <position position="325"/>
    </location>
</feature>
<feature type="modified residue" description="N6-acetyllysine; alternate" evidence="32">
    <location>
        <position position="373"/>
    </location>
</feature>
<feature type="modified residue" description="Phosphoserine" evidence="3">
    <location>
        <position position="409"/>
    </location>
</feature>
<feature type="modified residue" description="Phosphoserine" evidence="5">
    <location>
        <position position="412"/>
    </location>
</feature>
<feature type="modified residue" description="Phosphoserine" evidence="31">
    <location>
        <position position="419"/>
    </location>
</feature>
<feature type="modified residue" description="Phosphoserine" evidence="29 31">
    <location>
        <position position="420"/>
    </location>
</feature>
<feature type="modified residue" description="Phosphothreonine" evidence="3">
    <location>
        <position position="426"/>
    </location>
</feature>
<feature type="modified residue" description="Phosphoserine" evidence="29">
    <location>
        <position position="430"/>
    </location>
</feature>
<feature type="modified residue" description="Phosphothreonine" evidence="3">
    <location>
        <position position="436"/>
    </location>
</feature>
<feature type="modified residue" description="Phosphoserine" evidence="3">
    <location>
        <position position="438"/>
    </location>
</feature>
<feature type="modified residue" description="N6-acetyllysine; alternate" evidence="3">
    <location>
        <position position="445"/>
    </location>
</feature>
<feature type="modified residue" description="N6-succinyllysine; alternate" evidence="32">
    <location>
        <position position="445"/>
    </location>
</feature>
<feature type="modified residue" description="Phosphothreonine" evidence="3">
    <location>
        <position position="446"/>
    </location>
</feature>
<feature type="modified residue" description="Phosphothreonine" evidence="3">
    <location>
        <position position="458"/>
    </location>
</feature>
<feature type="modified residue" description="Phosphoserine" evidence="30 31">
    <location>
        <position position="459"/>
    </location>
</feature>
<feature type="glycosylation site" description="O-linked (GlcNAc) serine; alternate" evidence="1">
    <location>
        <position position="7"/>
    </location>
</feature>
<feature type="glycosylation site" description="O-linked (GlcNAc) threonine" evidence="1">
    <location>
        <position position="33"/>
    </location>
</feature>
<feature type="glycosylation site" description="O-linked (GlcNAc) serine; alternate" evidence="1">
    <location>
        <position position="34"/>
    </location>
</feature>
<feature type="cross-link" description="Glycyl lysine isopeptide (Lys-Gly) (interchain with G-Cter in SUMO2)" evidence="3">
    <location>
        <position position="104"/>
    </location>
</feature>
<feature type="cross-link" description="Glycyl lysine isopeptide (Lys-Gly) (interchain with G-Cter in SUMO2); alternate" evidence="3">
    <location>
        <position position="120"/>
    </location>
</feature>
<feature type="cross-link" description="Glycyl lysine isopeptide (Lys-Gly) (interchain with G-Cter in SUMO2); alternate" evidence="3">
    <location>
        <position position="129"/>
    </location>
</feature>
<feature type="cross-link" description="Glycyl lysine isopeptide (Lys-Gly) (interchain with G-Cter in SUMO2); alternate" evidence="3">
    <location>
        <position position="139"/>
    </location>
</feature>
<feature type="cross-link" description="Glycyl lysine isopeptide (Lys-Gly) (interchain with G-Cter in SUMO2); alternate" evidence="3">
    <location>
        <position position="223"/>
    </location>
</feature>
<feature type="cross-link" description="Glycyl lysine isopeptide (Lys-Gly) (interchain with G-Cter in SUMO2)" evidence="3">
    <location>
        <position position="262"/>
    </location>
</feature>
<feature type="cross-link" description="Glycyl lysine isopeptide (Lys-Gly) (interchain with G-Cter in SUMO2); alternate" evidence="3">
    <location>
        <position position="294"/>
    </location>
</feature>
<feature type="cross-link" description="Glycyl lysine isopeptide (Lys-Gly) (interchain with G-Cter in SUMO2)" evidence="3">
    <location>
        <position position="313"/>
    </location>
</feature>
<feature type="cross-link" description="Glycyl lysine isopeptide (Lys-Gly) (interchain with G-Cter in SUMO2); alternate" evidence="3">
    <location>
        <position position="373"/>
    </location>
</feature>
<feature type="cross-link" description="Glycyl lysine isopeptide (Lys-Gly) (interchain with G-Cter in SUMO2)" evidence="3">
    <location>
        <position position="439"/>
    </location>
</feature>
<feature type="cross-link" description="Glycyl lysine isopeptide (Lys-Gly) (interchain with G-Cter in SUMO1); alternate" evidence="3">
    <location>
        <position position="445"/>
    </location>
</feature>
<feature type="cross-link" description="Glycyl lysine isopeptide (Lys-Gly) (interchain with G-Cter in SUMO2); alternate" evidence="3">
    <location>
        <position position="445"/>
    </location>
</feature>
<feature type="sequence conflict" description="In Ref. 6; BAA19834." evidence="24" ref="6">
    <original>L</original>
    <variation>S</variation>
    <location>
        <position position="70"/>
    </location>
</feature>
<feature type="sequence conflict" description="In Ref. 6; BAA19834." evidence="24" ref="6">
    <original>LNDRFA</original>
    <variation>ILLAEL</variation>
    <location>
        <begin position="110"/>
        <end position="115"/>
    </location>
</feature>
<feature type="sequence conflict" description="In Ref. 4; CAA35803." evidence="24" ref="4">
    <original>EL</original>
    <variation>DV</variation>
    <location>
        <begin position="156"/>
        <end position="157"/>
    </location>
</feature>
<feature type="sequence conflict" description="In Ref. 2; CAA39807." evidence="24" ref="2">
    <original>L</original>
    <variation>F</variation>
    <location>
        <position position="164"/>
    </location>
</feature>
<feature type="sequence conflict" description="In Ref. 4; CAA35803." evidence="24" ref="4">
    <original>E</original>
    <variation>V</variation>
    <location>
        <position position="338"/>
    </location>
</feature>
<feature type="sequence conflict" description="In Ref. 1; AAA40555." evidence="24" ref="1">
    <original>E</original>
    <variation>D</variation>
    <location>
        <position position="374"/>
    </location>
</feature>
<accession>P20152</accession>
<accession>O08704</accession>
<accession>Q8CCH1</accession>
<name>VIME_MOUSE</name>
<reference key="1">
    <citation type="journal article" date="1989" name="Gene">
        <title>Vimentin cDNA clones covering the complete intermediate-filament protein are found in an EHS tumor cDNA library.</title>
        <authorList>
            <person name="Wood L."/>
            <person name="Theriault N."/>
            <person name="Vogeli G."/>
        </authorList>
    </citation>
    <scope>NUCLEOTIDE SEQUENCE [MRNA]</scope>
</reference>
<reference key="2">
    <citation type="submission" date="1990-10" db="EMBL/GenBank/DDBJ databases">
        <authorList>
            <person name="Podolin P.L."/>
            <person name="Prystowsky M.B."/>
        </authorList>
    </citation>
    <scope>NUCLEOTIDE SEQUENCE [MRNA]</scope>
    <source>
        <strain>C57BL/6J</strain>
        <tissue>Spleen</tissue>
    </source>
</reference>
<reference key="3">
    <citation type="journal article" date="1990" name="Mol. Gen. Genet.">
        <title>Coding sequence and flanking regions of the mouse vimentin gene.</title>
        <authorList>
            <person name="Hennekes H."/>
            <person name="Kuehn S."/>
            <person name="Traub P."/>
        </authorList>
    </citation>
    <scope>NUCLEOTIDE SEQUENCE [MRNA]</scope>
</reference>
<reference key="4">
    <citation type="journal article" date="1990" name="Oncogene">
        <title>Mouse vimentin: structural relationship to fos, jun, CREB and tpr.</title>
        <authorList>
            <person name="Capetanaki Y."/>
            <person name="Kuisk I."/>
            <person name="Rothblum K."/>
            <person name="Starnes S."/>
        </authorList>
    </citation>
    <scope>NUCLEOTIDE SEQUENCE [MRNA]</scope>
    <source>
        <tissue>Smooth muscle</tissue>
    </source>
</reference>
<reference key="5">
    <citation type="submission" date="1996-09" db="EMBL/GenBank/DDBJ databases">
        <authorList>
            <person name="Rauscher A."/>
        </authorList>
    </citation>
    <scope>NUCLEOTIDE SEQUENCE [GENOMIC DNA]</scope>
</reference>
<reference key="6">
    <citation type="journal article" date="1995" name="Gene">
        <title>Transcriptional regulation of the vimentin-encoding gene in mouse myeloid leukemia M1 cells.</title>
        <authorList>
            <person name="Nakamura N."/>
            <person name="Shida M."/>
            <person name="Hirayoshi K."/>
            <person name="Nagata K."/>
        </authorList>
    </citation>
    <scope>NUCLEOTIDE SEQUENCE [GENOMIC DNA] OF 1-115</scope>
    <source>
        <strain>BALB/cJ</strain>
    </source>
</reference>
<reference key="7">
    <citation type="journal article" date="2005" name="Science">
        <title>The transcriptional landscape of the mammalian genome.</title>
        <authorList>
            <person name="Carninci P."/>
            <person name="Kasukawa T."/>
            <person name="Katayama S."/>
            <person name="Gough J."/>
            <person name="Frith M.C."/>
            <person name="Maeda N."/>
            <person name="Oyama R."/>
            <person name="Ravasi T."/>
            <person name="Lenhard B."/>
            <person name="Wells C."/>
            <person name="Kodzius R."/>
            <person name="Shimokawa K."/>
            <person name="Bajic V.B."/>
            <person name="Brenner S.E."/>
            <person name="Batalov S."/>
            <person name="Forrest A.R."/>
            <person name="Zavolan M."/>
            <person name="Davis M.J."/>
            <person name="Wilming L.G."/>
            <person name="Aidinis V."/>
            <person name="Allen J.E."/>
            <person name="Ambesi-Impiombato A."/>
            <person name="Apweiler R."/>
            <person name="Aturaliya R.N."/>
            <person name="Bailey T.L."/>
            <person name="Bansal M."/>
            <person name="Baxter L."/>
            <person name="Beisel K.W."/>
            <person name="Bersano T."/>
            <person name="Bono H."/>
            <person name="Chalk A.M."/>
            <person name="Chiu K.P."/>
            <person name="Choudhary V."/>
            <person name="Christoffels A."/>
            <person name="Clutterbuck D.R."/>
            <person name="Crowe M.L."/>
            <person name="Dalla E."/>
            <person name="Dalrymple B.P."/>
            <person name="de Bono B."/>
            <person name="Della Gatta G."/>
            <person name="di Bernardo D."/>
            <person name="Down T."/>
            <person name="Engstrom P."/>
            <person name="Fagiolini M."/>
            <person name="Faulkner G."/>
            <person name="Fletcher C.F."/>
            <person name="Fukushima T."/>
            <person name="Furuno M."/>
            <person name="Futaki S."/>
            <person name="Gariboldi M."/>
            <person name="Georgii-Hemming P."/>
            <person name="Gingeras T.R."/>
            <person name="Gojobori T."/>
            <person name="Green R.E."/>
            <person name="Gustincich S."/>
            <person name="Harbers M."/>
            <person name="Hayashi Y."/>
            <person name="Hensch T.K."/>
            <person name="Hirokawa N."/>
            <person name="Hill D."/>
            <person name="Huminiecki L."/>
            <person name="Iacono M."/>
            <person name="Ikeo K."/>
            <person name="Iwama A."/>
            <person name="Ishikawa T."/>
            <person name="Jakt M."/>
            <person name="Kanapin A."/>
            <person name="Katoh M."/>
            <person name="Kawasawa Y."/>
            <person name="Kelso J."/>
            <person name="Kitamura H."/>
            <person name="Kitano H."/>
            <person name="Kollias G."/>
            <person name="Krishnan S.P."/>
            <person name="Kruger A."/>
            <person name="Kummerfeld S.K."/>
            <person name="Kurochkin I.V."/>
            <person name="Lareau L.F."/>
            <person name="Lazarevic D."/>
            <person name="Lipovich L."/>
            <person name="Liu J."/>
            <person name="Liuni S."/>
            <person name="McWilliam S."/>
            <person name="Madan Babu M."/>
            <person name="Madera M."/>
            <person name="Marchionni L."/>
            <person name="Matsuda H."/>
            <person name="Matsuzawa S."/>
            <person name="Miki H."/>
            <person name="Mignone F."/>
            <person name="Miyake S."/>
            <person name="Morris K."/>
            <person name="Mottagui-Tabar S."/>
            <person name="Mulder N."/>
            <person name="Nakano N."/>
            <person name="Nakauchi H."/>
            <person name="Ng P."/>
            <person name="Nilsson R."/>
            <person name="Nishiguchi S."/>
            <person name="Nishikawa S."/>
            <person name="Nori F."/>
            <person name="Ohara O."/>
            <person name="Okazaki Y."/>
            <person name="Orlando V."/>
            <person name="Pang K.C."/>
            <person name="Pavan W.J."/>
            <person name="Pavesi G."/>
            <person name="Pesole G."/>
            <person name="Petrovsky N."/>
            <person name="Piazza S."/>
            <person name="Reed J."/>
            <person name="Reid J.F."/>
            <person name="Ring B.Z."/>
            <person name="Ringwald M."/>
            <person name="Rost B."/>
            <person name="Ruan Y."/>
            <person name="Salzberg S.L."/>
            <person name="Sandelin A."/>
            <person name="Schneider C."/>
            <person name="Schoenbach C."/>
            <person name="Sekiguchi K."/>
            <person name="Semple C.A."/>
            <person name="Seno S."/>
            <person name="Sessa L."/>
            <person name="Sheng Y."/>
            <person name="Shibata Y."/>
            <person name="Shimada H."/>
            <person name="Shimada K."/>
            <person name="Silva D."/>
            <person name="Sinclair B."/>
            <person name="Sperling S."/>
            <person name="Stupka E."/>
            <person name="Sugiura K."/>
            <person name="Sultana R."/>
            <person name="Takenaka Y."/>
            <person name="Taki K."/>
            <person name="Tammoja K."/>
            <person name="Tan S.L."/>
            <person name="Tang S."/>
            <person name="Taylor M.S."/>
            <person name="Tegner J."/>
            <person name="Teichmann S.A."/>
            <person name="Ueda H.R."/>
            <person name="van Nimwegen E."/>
            <person name="Verardo R."/>
            <person name="Wei C.L."/>
            <person name="Yagi K."/>
            <person name="Yamanishi H."/>
            <person name="Zabarovsky E."/>
            <person name="Zhu S."/>
            <person name="Zimmer A."/>
            <person name="Hide W."/>
            <person name="Bult C."/>
            <person name="Grimmond S.M."/>
            <person name="Teasdale R.D."/>
            <person name="Liu E.T."/>
            <person name="Brusic V."/>
            <person name="Quackenbush J."/>
            <person name="Wahlestedt C."/>
            <person name="Mattick J.S."/>
            <person name="Hume D.A."/>
            <person name="Kai C."/>
            <person name="Sasaki D."/>
            <person name="Tomaru Y."/>
            <person name="Fukuda S."/>
            <person name="Kanamori-Katayama M."/>
            <person name="Suzuki M."/>
            <person name="Aoki J."/>
            <person name="Arakawa T."/>
            <person name="Iida J."/>
            <person name="Imamura K."/>
            <person name="Itoh M."/>
            <person name="Kato T."/>
            <person name="Kawaji H."/>
            <person name="Kawagashira N."/>
            <person name="Kawashima T."/>
            <person name="Kojima M."/>
            <person name="Kondo S."/>
            <person name="Konno H."/>
            <person name="Nakano K."/>
            <person name="Ninomiya N."/>
            <person name="Nishio T."/>
            <person name="Okada M."/>
            <person name="Plessy C."/>
            <person name="Shibata K."/>
            <person name="Shiraki T."/>
            <person name="Suzuki S."/>
            <person name="Tagami M."/>
            <person name="Waki K."/>
            <person name="Watahiki A."/>
            <person name="Okamura-Oho Y."/>
            <person name="Suzuki H."/>
            <person name="Kawai J."/>
            <person name="Hayashizaki Y."/>
        </authorList>
    </citation>
    <scope>NUCLEOTIDE SEQUENCE [LARGE SCALE MRNA] OF 32-188</scope>
    <source>
        <strain>C57BL/6J</strain>
        <tissue>Testis</tissue>
    </source>
</reference>
<reference key="8">
    <citation type="journal article" date="1989" name="Biochemistry">
        <title>Domain- and sequence-specific phosphorylation of vimentin induces disassembly of the filament structure.</title>
        <authorList>
            <person name="Ando S."/>
            <person name="Tanabe K."/>
            <person name="Gonda Y."/>
            <person name="Sato C."/>
            <person name="Inagaki M."/>
        </authorList>
    </citation>
    <scope>PROTEIN SEQUENCE OF 5-69</scope>
    <scope>PHOSPHORYLATION AT SER-7; SER-9; SER-10; SER-21; SER-25; SER-26; SER-34; SER-39; SER-42; SER-47; SER-51 AND SER-66</scope>
    <source>
        <tissue>Smooth muscle</tissue>
    </source>
</reference>
<reference key="9">
    <citation type="journal article" date="1994" name="Electrophoresis">
        <title>Separation and sequencing of familiar and novel murine proteins using preparative two-dimensional gel electrophoresis.</title>
        <authorList>
            <person name="Merrick B.A."/>
            <person name="Patterson R.M."/>
            <person name="Wichter L.L."/>
            <person name="He C."/>
            <person name="Selkirk J.K."/>
        </authorList>
    </citation>
    <scope>PROTEIN SEQUENCE OF 72-91</scope>
    <source>
        <tissue>Fibroblast</tissue>
    </source>
</reference>
<reference key="10">
    <citation type="journal article" date="1991" name="Biochem. Biophys. Res. Commun.">
        <title>Evidence that Ser-82 is a unique phosphorylation site on vimentin for Ca2(+)-calmodulin-dependent protein kinase II.</title>
        <authorList>
            <person name="Ando S."/>
            <person name="Tokui T."/>
            <person name="Yamauchi T."/>
            <person name="Sugiura H."/>
            <person name="Tanabe K."/>
            <person name="Inagaki M."/>
        </authorList>
    </citation>
    <scope>PHOSPHORYLATION AT SER-39 AND SER-83</scope>
</reference>
<reference key="11">
    <citation type="journal article" date="1998" name="J. Biol. Chem.">
        <title>Phosphorylation of vimentin by Rho-associated kinase at a unique amino-terminal site that is specifically phosphorylated during cytokinesis.</title>
        <authorList>
            <person name="Goto H."/>
            <person name="Kosako H."/>
            <person name="Tanabe K."/>
            <person name="Yanagida M."/>
            <person name="Sakurai M."/>
            <person name="Amano M."/>
            <person name="Kaibuchi K."/>
            <person name="Inagaki M."/>
        </authorList>
    </citation>
    <scope>PHOSPHORYLATION AT SER-39 AND SER-72</scope>
</reference>
<reference key="12">
    <citation type="journal article" date="2004" name="Eur. J. Biochem.">
        <title>Actin-binding domain of mouse plectin. Crystal structure and binding to vimentin.</title>
        <authorList>
            <person name="Sevcik J."/>
            <person name="Urbanikova L."/>
            <person name="Kost'an J."/>
            <person name="Janda L."/>
            <person name="Wiche G."/>
        </authorList>
    </citation>
    <scope>INTERACTION WITH PLEC</scope>
</reference>
<reference key="13">
    <citation type="journal article" date="2004" name="Exp. Eye Res.">
        <title>Bfsp2 mutation found in mouse 129 strains causes the loss of CP49' and induces vimentin-dependent changes in the lens fibre cell cytoskeleton.</title>
        <authorList>
            <person name="Sandilands A."/>
            <person name="Wang X."/>
            <person name="Hutcheson A.M."/>
            <person name="James J."/>
            <person name="Prescott A.R."/>
            <person name="Wegener A."/>
            <person name="Pekny M."/>
            <person name="Gong X."/>
            <person name="Quinlan R.A."/>
        </authorList>
    </citation>
    <scope>TISSUE SPECIFICITY</scope>
    <scope>DISRUPTION PHENOTYPE</scope>
    <source>
        <strain evidence="9">129/SvJ</strain>
    </source>
</reference>
<reference key="14">
    <citation type="journal article" date="2004" name="Invest. Ophthalmol. Vis. Sci.">
        <title>Characterization of a mutation in the lens-specific CP49 in the 129 strain of mouse.</title>
        <authorList>
            <person name="Alizadeh A."/>
            <person name="Clark J."/>
            <person name="Seeberger T."/>
            <person name="Hess J."/>
            <person name="Blankenship T."/>
            <person name="FitzGerald P.G."/>
        </authorList>
    </citation>
    <scope>TISSUE SPECIFICITY</scope>
</reference>
<reference key="15">
    <citation type="journal article" date="2004" name="Mol. Cell. Proteomics">
        <title>Phosphoproteomic analysis of the developing mouse brain.</title>
        <authorList>
            <person name="Ballif B.A."/>
            <person name="Villen J."/>
            <person name="Beausoleil S.A."/>
            <person name="Schwartz D."/>
            <person name="Gygi S.P."/>
        </authorList>
    </citation>
    <scope>PHOSPHORYLATION [LARGE SCALE ANALYSIS] AT SER-83</scope>
    <scope>IDENTIFICATION BY MASS SPECTROMETRY [LARGE SCALE ANALYSIS]</scope>
    <source>
        <tissue>Embryonic brain</tissue>
    </source>
</reference>
<reference key="16">
    <citation type="journal article" date="2005" name="Nat. Biotechnol.">
        <title>Immunoaffinity profiling of tyrosine phosphorylation in cancer cells.</title>
        <authorList>
            <person name="Rush J."/>
            <person name="Moritz A."/>
            <person name="Lee K.A."/>
            <person name="Guo A."/>
            <person name="Goss V.L."/>
            <person name="Spek E.J."/>
            <person name="Zhang H."/>
            <person name="Zha X.-M."/>
            <person name="Polakiewicz R.D."/>
            <person name="Comb M.J."/>
        </authorList>
    </citation>
    <scope>IDENTIFICATION BY MASS SPECTROMETRY [LARGE SCALE ANALYSIS]</scope>
</reference>
<reference key="17">
    <citation type="journal article" date="2007" name="J. Cell Sci.">
        <title>Synemin is expressed in reactive astrocytes in neurotrauma and interacts differentially with vimentin and GFAP intermediate filament networks.</title>
        <authorList>
            <person name="Jing R."/>
            <person name="Wilhelmsson U."/>
            <person name="Goodwill W."/>
            <person name="Li L."/>
            <person name="Pan Y."/>
            <person name="Pekny M."/>
            <person name="Skalli O."/>
        </authorList>
    </citation>
    <scope>INTERACTION WITH SYNM</scope>
</reference>
<reference key="18">
    <citation type="journal article" date="2007" name="J. Immunol.">
        <title>Quantitative time-resolved phosphoproteomic analysis of mast cell signaling.</title>
        <authorList>
            <person name="Cao L."/>
            <person name="Yu K."/>
            <person name="Banh C."/>
            <person name="Nguyen V."/>
            <person name="Ritz A."/>
            <person name="Raphael B.J."/>
            <person name="Kawakami Y."/>
            <person name="Kawakami T."/>
            <person name="Salomon A.R."/>
        </authorList>
    </citation>
    <scope>PHOSPHORYLATION [LARGE SCALE ANALYSIS] AT TYR-53 AND TYR-61</scope>
    <scope>IDENTIFICATION BY MASS SPECTROMETRY [LARGE SCALE ANALYSIS]</scope>
    <source>
        <tissue>Mast cell</tissue>
    </source>
</reference>
<reference key="19">
    <citation type="journal article" date="2007" name="Proc. Natl. Acad. Sci. U.S.A.">
        <title>Large-scale phosphorylation analysis of mouse liver.</title>
        <authorList>
            <person name="Villen J."/>
            <person name="Beausoleil S.A."/>
            <person name="Gerber S.A."/>
            <person name="Gygi S.P."/>
        </authorList>
    </citation>
    <scope>PHOSPHORYLATION [LARGE SCALE ANALYSIS] AT SER-56</scope>
    <scope>IDENTIFICATION BY MASS SPECTROMETRY [LARGE SCALE ANALYSIS]</scope>
    <source>
        <tissue>Liver</tissue>
    </source>
</reference>
<reference key="20">
    <citation type="journal article" date="2008" name="J. Biol. Chem.">
        <title>A role for lengsin, a recruited enzyme, in terminal differentiation in the vertebrate lens.</title>
        <authorList>
            <person name="Wyatt K."/>
            <person name="Gao C."/>
            <person name="Tsai J.-Y."/>
            <person name="Fariss R.N."/>
            <person name="Ray S."/>
            <person name="Wistow G."/>
        </authorList>
    </citation>
    <scope>INTERACTION WITH LGSN</scope>
</reference>
<reference key="21">
    <citation type="journal article" date="2008" name="J. Cell Sci.">
        <title>TorsinA binds the KASH domain of nesprins and participates in linkage between nuclear envelope and cytoskeleton.</title>
        <authorList>
            <person name="Nery F.C."/>
            <person name="Zeng J."/>
            <person name="Niland B.P."/>
            <person name="Hewett J."/>
            <person name="Farley J."/>
            <person name="Irimia D."/>
            <person name="Li Y."/>
            <person name="Wiche G."/>
            <person name="Sonnenberg A."/>
            <person name="Breakefield X.O."/>
        </authorList>
    </citation>
    <scope>INTERACTION WITH TOR1A</scope>
</reference>
<reference key="22">
    <citation type="journal article" date="2009" name="Hum. Mutat.">
        <title>Cytokines as genetic modifiers in K5-/- mice and in human epidermolysis bullosa simplex.</title>
        <authorList>
            <person name="Roth W."/>
            <person name="Reuter U."/>
            <person name="Wohlenberg C."/>
            <person name="Bruckner-Tuderman L."/>
            <person name="Magin T.M."/>
        </authorList>
    </citation>
    <scope>TISSUE SPECIFICITY</scope>
</reference>
<reference key="23">
    <citation type="journal article" date="2009" name="Immunity">
        <title>The phagosomal proteome in interferon-gamma-activated macrophages.</title>
        <authorList>
            <person name="Trost M."/>
            <person name="English L."/>
            <person name="Lemieux S."/>
            <person name="Courcelles M."/>
            <person name="Desjardins M."/>
            <person name="Thibault P."/>
        </authorList>
    </citation>
    <scope>PHOSPHORYLATION [LARGE SCALE ANALYSIS] AT SER-56; SER-214 AND SER-459</scope>
    <scope>IDENTIFICATION BY MASS SPECTROMETRY [LARGE SCALE ANALYSIS]</scope>
</reference>
<reference key="24">
    <citation type="journal article" date="2009" name="Invest. Ophthalmol. Vis. Sci.">
        <title>Periplakin interactions with lens intermediate and beaded filaments.</title>
        <authorList>
            <person name="Yoon K.H."/>
            <person name="FitzGerald P.G."/>
        </authorList>
    </citation>
    <scope>INTERACTION WITH BFSP2 AND PPL</scope>
    <scope>SUBCELLULAR LOCATION</scope>
    <scope>TISSUE SPECIFICITY</scope>
    <scope>DEVELOPMENTAL STAGE</scope>
</reference>
<reference key="25">
    <citation type="journal article" date="2009" name="Mol. Biol. Cell">
        <title>Vimentin regulates scribble activity by protecting it from proteasomal degradation.</title>
        <authorList>
            <person name="Phua D.C."/>
            <person name="Humbert P.O."/>
            <person name="Hunziker W."/>
        </authorList>
    </citation>
    <scope>INTERACTION WITH SCRIB</scope>
</reference>
<reference key="26">
    <citation type="journal article" date="2009" name="Mol. Cell. Proteomics">
        <title>Large scale localization of protein phosphorylation by use of electron capture dissociation mass spectrometry.</title>
        <authorList>
            <person name="Sweet S.M."/>
            <person name="Bailey C.M."/>
            <person name="Cunningham D.L."/>
            <person name="Heath J.K."/>
            <person name="Cooper H.J."/>
        </authorList>
    </citation>
    <scope>PHOSPHORYLATION [LARGE SCALE ANALYSIS] AT SER-39; SER-49; SER-56; SER-66; SER-420 AND SER-430</scope>
    <scope>IDENTIFICATION BY MASS SPECTROMETRY [LARGE SCALE ANALYSIS]</scope>
    <source>
        <tissue>Embryonic fibroblast</tissue>
    </source>
</reference>
<reference key="27">
    <citation type="journal article" date="2010" name="Cell">
        <title>A tissue-specific atlas of mouse protein phosphorylation and expression.</title>
        <authorList>
            <person name="Huttlin E.L."/>
            <person name="Jedrychowski M.P."/>
            <person name="Elias J.E."/>
            <person name="Goswami T."/>
            <person name="Rad R."/>
            <person name="Beausoleil S.A."/>
            <person name="Villen J."/>
            <person name="Haas W."/>
            <person name="Sowa M.E."/>
            <person name="Gygi S.P."/>
        </authorList>
    </citation>
    <scope>PHOSPHORYLATION [LARGE SCALE ANALYSIS] AT SER-51; SER-56; SER-83; SER-325; SER-419; SER-420 AND SER-459</scope>
    <scope>IDENTIFICATION BY MASS SPECTROMETRY [LARGE SCALE ANALYSIS]</scope>
    <source>
        <tissue>Brain</tissue>
        <tissue>Brown adipose tissue</tissue>
        <tissue>Heart</tissue>
        <tissue>Kidney</tissue>
        <tissue>Lung</tissue>
        <tissue>Pancreas</tissue>
        <tissue>Spleen</tissue>
        <tissue>Testis</tissue>
    </source>
</reference>
<reference key="28">
    <citation type="journal article" date="2011" name="Dev. Biol.">
        <title>Periaxin is required for hexagonal geometry and membrane organization of mature lens fibers.</title>
        <authorList>
            <person name="Maddala R."/>
            <person name="Skiba N.P."/>
            <person name="Lalane R. III"/>
            <person name="Sherman D.L."/>
            <person name="Brophy P.J."/>
            <person name="Rao P.V."/>
        </authorList>
    </citation>
    <scope>TISSUE SPECIFICITY</scope>
    <scope>IDENTIFICATION IN A COMPLEX WITH EZR; AHNAK; BFSP1; BFSP2; ANK2; PLEC; PRX AND SPECTRIN</scope>
    <scope>IDENTIFICATION BY MASS SPECTROMETRY</scope>
</reference>
<reference key="29">
    <citation type="journal article" date="2013" name="Mol. Cell">
        <title>SIRT5-mediated lysine desuccinylation impacts diverse metabolic pathways.</title>
        <authorList>
            <person name="Park J."/>
            <person name="Chen Y."/>
            <person name="Tishkoff D.X."/>
            <person name="Peng C."/>
            <person name="Tan M."/>
            <person name="Dai L."/>
            <person name="Xie Z."/>
            <person name="Zhang Y."/>
            <person name="Zwaans B.M."/>
            <person name="Skinner M.E."/>
            <person name="Lombard D.B."/>
            <person name="Zhao Y."/>
        </authorList>
    </citation>
    <scope>ACETYLATION [LARGE SCALE ANALYSIS] AT LYS-120; LYS-129; LYS-139; LYS-168; LYS-188; LYS-223; LYS-235; LYS-294 AND LYS-373</scope>
    <scope>SUCCINYLATION [LARGE SCALE ANALYSIS] AT LYS-120; LYS-129; LYS-188; LYS-294 AND LYS-445</scope>
    <scope>IDENTIFICATION BY MASS SPECTROMETRY [LARGE SCALE ANALYSIS]</scope>
    <source>
        <tissue>Embryonic fibroblast</tissue>
    </source>
</reference>
<reference key="30">
    <citation type="journal article" date="2014" name="J. Invest. Dermatol.">
        <title>Interaction of plectin with keratins 5 and 14: dependence on several plectin domains and keratin quaternary structure.</title>
        <authorList>
            <person name="Bouameur J.E."/>
            <person name="Favre B."/>
            <person name="Fontao L."/>
            <person name="Lingasamy P."/>
            <person name="Begre N."/>
            <person name="Borradori L."/>
        </authorList>
    </citation>
    <scope>INTERACTION WITH PLEC</scope>
</reference>
<reference key="31">
    <citation type="journal article" date="2016" name="Eur. J. Cell Biol.">
        <title>Coronin 1C-free primary mouse fibroblasts exhibit robust rearrangements in the orientation of actin filaments, microtubules and intermediate filaments.</title>
        <authorList>
            <person name="Behrens J."/>
            <person name="Solga R."/>
            <person name="Ziemann A."/>
            <person name="Rastetter R.H."/>
            <person name="Berwanger C."/>
            <person name="Herrmann H."/>
            <person name="Noegel A.A."/>
            <person name="Clemen C.S."/>
        </authorList>
    </citation>
    <scope>INTERACTION WITH CORO1C</scope>
</reference>
<reference key="32">
    <citation type="journal article" date="2016" name="Mol. Vis.">
        <title>Expression of the type VI intermediate filament proteins CP49 and filensin in the mouse lens epithelium.</title>
        <authorList>
            <person name="FitzGerald P."/>
            <person name="Sun N."/>
            <person name="Shibata B."/>
            <person name="Hess J.F."/>
        </authorList>
    </citation>
    <scope>SUBCELLULAR LOCATION</scope>
    <scope>TISSUE SPECIFICITY</scope>
    <scope>DISRUPTION PHENOTYPE</scope>
</reference>